<proteinExistence type="inferred from homology"/>
<gene>
    <name evidence="1" type="primary">lysZ</name>
    <name type="ordered locus">M1627_2061</name>
</gene>
<organism>
    <name type="scientific">Saccharolobus islandicus (strain M.16.27)</name>
    <name type="common">Sulfolobus islandicus</name>
    <dbReference type="NCBI Taxonomy" id="427318"/>
    <lineage>
        <taxon>Archaea</taxon>
        <taxon>Thermoproteota</taxon>
        <taxon>Thermoprotei</taxon>
        <taxon>Sulfolobales</taxon>
        <taxon>Sulfolobaceae</taxon>
        <taxon>Saccharolobus</taxon>
    </lineage>
</organism>
<reference key="1">
    <citation type="journal article" date="2009" name="Proc. Natl. Acad. Sci. U.S.A.">
        <title>Biogeography of the Sulfolobus islandicus pan-genome.</title>
        <authorList>
            <person name="Reno M.L."/>
            <person name="Held N.L."/>
            <person name="Fields C.J."/>
            <person name="Burke P.V."/>
            <person name="Whitaker R.J."/>
        </authorList>
    </citation>
    <scope>NUCLEOTIDE SEQUENCE [LARGE SCALE GENOMIC DNA]</scope>
    <source>
        <strain>M.16.27</strain>
    </source>
</reference>
<keyword id="KW-0028">Amino-acid biosynthesis</keyword>
<keyword id="KW-0055">Arginine biosynthesis</keyword>
<keyword id="KW-0067">ATP-binding</keyword>
<keyword id="KW-0963">Cytoplasm</keyword>
<keyword id="KW-0418">Kinase</keyword>
<keyword id="KW-0457">Lysine biosynthesis</keyword>
<keyword id="KW-0547">Nucleotide-binding</keyword>
<keyword id="KW-0808">Transferase</keyword>
<evidence type="ECO:0000255" key="1">
    <source>
        <dbReference type="HAMAP-Rule" id="MF_02082"/>
    </source>
</evidence>
<feature type="chain" id="PRO_1000202568" description="[LysW]-aminoadipate/[LysW]-glutamate kinase">
    <location>
        <begin position="1"/>
        <end position="264"/>
    </location>
</feature>
<feature type="binding site" evidence="1">
    <location>
        <begin position="35"/>
        <end position="36"/>
    </location>
    <ligand>
        <name>substrate</name>
    </ligand>
</feature>
<feature type="binding site" evidence="1">
    <location>
        <position position="62"/>
    </location>
    <ligand>
        <name>substrate</name>
    </ligand>
</feature>
<feature type="binding site" evidence="1">
    <location>
        <position position="167"/>
    </location>
    <ligand>
        <name>substrate</name>
    </ligand>
</feature>
<feature type="site" description="Transition state stabilizer" evidence="1">
    <location>
        <position position="5"/>
    </location>
</feature>
<feature type="site" description="Transition state stabilizer" evidence="1">
    <location>
        <position position="224"/>
    </location>
</feature>
<accession>C3MZY8</accession>
<dbReference type="EC" id="2.7.2.17" evidence="1"/>
<dbReference type="EC" id="2.7.2.19" evidence="1"/>
<dbReference type="EMBL" id="CP001401">
    <property type="protein sequence ID" value="ACP55928.1"/>
    <property type="molecule type" value="Genomic_DNA"/>
</dbReference>
<dbReference type="RefSeq" id="WP_012711951.1">
    <property type="nucleotide sequence ID" value="NC_012632.1"/>
</dbReference>
<dbReference type="SMR" id="C3MZY8"/>
<dbReference type="KEGG" id="sim:M1627_2061"/>
<dbReference type="HOGENOM" id="CLU_053680_2_0_2"/>
<dbReference type="UniPathway" id="UPA00033">
    <property type="reaction ID" value="UER00036"/>
</dbReference>
<dbReference type="UniPathway" id="UPA00068"/>
<dbReference type="Proteomes" id="UP000002307">
    <property type="component" value="Chromosome"/>
</dbReference>
<dbReference type="GO" id="GO:0005737">
    <property type="term" value="C:cytoplasm"/>
    <property type="evidence" value="ECO:0007669"/>
    <property type="project" value="UniProtKB-SubCell"/>
</dbReference>
<dbReference type="GO" id="GO:0003991">
    <property type="term" value="F:acetylglutamate kinase activity"/>
    <property type="evidence" value="ECO:0007669"/>
    <property type="project" value="TreeGrafter"/>
</dbReference>
<dbReference type="GO" id="GO:0005524">
    <property type="term" value="F:ATP binding"/>
    <property type="evidence" value="ECO:0007669"/>
    <property type="project" value="UniProtKB-KW"/>
</dbReference>
<dbReference type="GO" id="GO:0043744">
    <property type="term" value="F:N2-acetyl-L-aminoadipate kinase activity"/>
    <property type="evidence" value="ECO:0007669"/>
    <property type="project" value="RHEA"/>
</dbReference>
<dbReference type="GO" id="GO:0042450">
    <property type="term" value="P:arginine biosynthetic process via ornithine"/>
    <property type="evidence" value="ECO:0007669"/>
    <property type="project" value="UniProtKB-UniRule"/>
</dbReference>
<dbReference type="GO" id="GO:0006526">
    <property type="term" value="P:L-arginine biosynthetic process"/>
    <property type="evidence" value="ECO:0007669"/>
    <property type="project" value="UniProtKB-UniPathway"/>
</dbReference>
<dbReference type="GO" id="GO:0019878">
    <property type="term" value="P:lysine biosynthetic process via aminoadipic acid"/>
    <property type="evidence" value="ECO:0007669"/>
    <property type="project" value="UniProtKB-UniRule"/>
</dbReference>
<dbReference type="CDD" id="cd04251">
    <property type="entry name" value="AAK_NAGK-UC"/>
    <property type="match status" value="1"/>
</dbReference>
<dbReference type="Gene3D" id="3.40.1160.10">
    <property type="entry name" value="Acetylglutamate kinase-like"/>
    <property type="match status" value="1"/>
</dbReference>
<dbReference type="HAMAP" id="MF_02082">
    <property type="entry name" value="LysZ"/>
    <property type="match status" value="1"/>
</dbReference>
<dbReference type="InterPro" id="IPR036393">
    <property type="entry name" value="AceGlu_kinase-like_sf"/>
</dbReference>
<dbReference type="InterPro" id="IPR004662">
    <property type="entry name" value="AcgluKinase_fam"/>
</dbReference>
<dbReference type="InterPro" id="IPR001048">
    <property type="entry name" value="Asp/Glu/Uridylate_kinase"/>
</dbReference>
<dbReference type="InterPro" id="IPR037529">
    <property type="entry name" value="LysZ"/>
</dbReference>
<dbReference type="NCBIfam" id="TIGR00761">
    <property type="entry name" value="argB"/>
    <property type="match status" value="1"/>
</dbReference>
<dbReference type="NCBIfam" id="NF010662">
    <property type="entry name" value="PRK14058.1-4"/>
    <property type="match status" value="1"/>
</dbReference>
<dbReference type="PANTHER" id="PTHR23342">
    <property type="entry name" value="N-ACETYLGLUTAMATE SYNTHASE"/>
    <property type="match status" value="1"/>
</dbReference>
<dbReference type="PANTHER" id="PTHR23342:SF0">
    <property type="entry name" value="N-ACETYLGLUTAMATE SYNTHASE, MITOCHONDRIAL"/>
    <property type="match status" value="1"/>
</dbReference>
<dbReference type="Pfam" id="PF00696">
    <property type="entry name" value="AA_kinase"/>
    <property type="match status" value="1"/>
</dbReference>
<dbReference type="PIRSF" id="PIRSF000728">
    <property type="entry name" value="NAGK"/>
    <property type="match status" value="1"/>
</dbReference>
<dbReference type="SUPFAM" id="SSF53633">
    <property type="entry name" value="Carbamate kinase-like"/>
    <property type="match status" value="1"/>
</dbReference>
<comment type="function">
    <text evidence="1">Involved in both the arginine and lysine biosynthetic pathways. Phosphorylates the LysW-bound precursors glutamate (for arginine biosynthesis), respectively alpha-aminoadipate (for lysine biosynthesis).</text>
</comment>
<comment type="catalytic activity">
    <reaction evidence="1">
        <text>[amino-group carrier protein]-C-terminal-N-(1,4-dicarboxybutan-1-yl)-L-glutamine + ATP = [amino-group carrier protein]-C-terminal-N-(1-carboxy-5-phosphooxy-5-oxopentan-1-yl)-L-glutamine + ADP</text>
        <dbReference type="Rhea" id="RHEA:41944"/>
        <dbReference type="Rhea" id="RHEA-COMP:9694"/>
        <dbReference type="Rhea" id="RHEA-COMP:9712"/>
        <dbReference type="ChEBI" id="CHEBI:30616"/>
        <dbReference type="ChEBI" id="CHEBI:78499"/>
        <dbReference type="ChEBI" id="CHEBI:78503"/>
        <dbReference type="ChEBI" id="CHEBI:456216"/>
        <dbReference type="EC" id="2.7.2.17"/>
    </reaction>
</comment>
<comment type="catalytic activity">
    <reaction evidence="1">
        <text>[amino-group carrier protein]-C-terminal-gamma-(L-glutamyl)-L-glutamate + ATP = [amino-group carrier protein]-C-terminal-gamma-(5-phospho-L-glutamyl)-L-glutamate + ADP</text>
        <dbReference type="Rhea" id="RHEA:52632"/>
        <dbReference type="Rhea" id="RHEA-COMP:13311"/>
        <dbReference type="Rhea" id="RHEA-COMP:13313"/>
        <dbReference type="ChEBI" id="CHEBI:30616"/>
        <dbReference type="ChEBI" id="CHEBI:136714"/>
        <dbReference type="ChEBI" id="CHEBI:136717"/>
        <dbReference type="ChEBI" id="CHEBI:456216"/>
        <dbReference type="EC" id="2.7.2.19"/>
    </reaction>
</comment>
<comment type="pathway">
    <text evidence="1">Amino-acid biosynthesis; L-lysine biosynthesis via AAA pathway; L-lysine from L-alpha-aminoadipate (Thermus route): step 2/5.</text>
</comment>
<comment type="pathway">
    <text evidence="1">Amino-acid biosynthesis; L-arginine biosynthesis.</text>
</comment>
<comment type="subcellular location">
    <subcellularLocation>
        <location evidence="1">Cytoplasm</location>
    </subcellularLocation>
</comment>
<comment type="similarity">
    <text evidence="1">Belongs to the acetylglutamate kinase family. LysZ subfamily.</text>
</comment>
<name>LYSZ_SACI3</name>
<protein>
    <recommendedName>
        <fullName evidence="1">[LysW]-aminoadipate/[LysW]-glutamate kinase</fullName>
        <ecNumber evidence="1">2.7.2.17</ecNumber>
        <ecNumber evidence="1">2.7.2.19</ecNumber>
    </recommendedName>
</protein>
<sequence>MIVVKIGGRVVKNSLDKVILDIANINDKVILVHGGGDIVTDYTKRLGIEPVFVTSPEGIRSRYTTKEELEVYIMAMSLINKTITSKLCSLGKNAIGITGVDGGLLLAERKKRIIVIDERGKKRIIEGGYTGKVKEVRSEVINHLMKLFDIIVVSPLALDVEESTPLNIDGDQAAFAISKAVKVNVLVILSDVEGVLVEGKVVDRLTPEEAKELSKKIGPGMNRKLLMAAESVENGVNKVIIGSGVKDRPVSSALELNGTVIVNG</sequence>